<reference key="1">
    <citation type="submission" date="2006-03" db="EMBL/GenBank/DDBJ databases">
        <title>Complete sequence of chromosome of Psychrobacter cryohalolentis K5.</title>
        <authorList>
            <consortium name="US DOE Joint Genome Institute"/>
            <person name="Copeland A."/>
            <person name="Lucas S."/>
            <person name="Lapidus A."/>
            <person name="Barry K."/>
            <person name="Detter J.C."/>
            <person name="Glavina T."/>
            <person name="Hammon N."/>
            <person name="Israni S."/>
            <person name="Dalin E."/>
            <person name="Tice H."/>
            <person name="Pitluck S."/>
            <person name="Brettin T."/>
            <person name="Bruce D."/>
            <person name="Han C."/>
            <person name="Tapia R."/>
            <person name="Sims D.R."/>
            <person name="Gilna P."/>
            <person name="Schmutz J."/>
            <person name="Larimer F."/>
            <person name="Land M."/>
            <person name="Hauser L."/>
            <person name="Kyrpides N."/>
            <person name="Kim E."/>
            <person name="Richardson P."/>
        </authorList>
    </citation>
    <scope>NUCLEOTIDE SEQUENCE [LARGE SCALE GENOMIC DNA]</scope>
    <source>
        <strain>ATCC BAA-1226 / DSM 17306 / VKM B-2378 / K5</strain>
    </source>
</reference>
<gene>
    <name evidence="1" type="primary">recA</name>
    <name type="ordered locus">Pcryo_2014</name>
</gene>
<dbReference type="EMBL" id="CP000323">
    <property type="protein sequence ID" value="ABE75791.1"/>
    <property type="molecule type" value="Genomic_DNA"/>
</dbReference>
<dbReference type="RefSeq" id="WP_011514331.1">
    <property type="nucleotide sequence ID" value="NC_007969.1"/>
</dbReference>
<dbReference type="SMR" id="Q1Q962"/>
<dbReference type="STRING" id="335284.Pcryo_2014"/>
<dbReference type="KEGG" id="pcr:Pcryo_2014"/>
<dbReference type="eggNOG" id="COG0468">
    <property type="taxonomic scope" value="Bacteria"/>
</dbReference>
<dbReference type="HOGENOM" id="CLU_040469_3_2_6"/>
<dbReference type="Proteomes" id="UP000002425">
    <property type="component" value="Chromosome"/>
</dbReference>
<dbReference type="GO" id="GO:0005829">
    <property type="term" value="C:cytosol"/>
    <property type="evidence" value="ECO:0007669"/>
    <property type="project" value="TreeGrafter"/>
</dbReference>
<dbReference type="GO" id="GO:0005524">
    <property type="term" value="F:ATP binding"/>
    <property type="evidence" value="ECO:0007669"/>
    <property type="project" value="UniProtKB-UniRule"/>
</dbReference>
<dbReference type="GO" id="GO:0016887">
    <property type="term" value="F:ATP hydrolysis activity"/>
    <property type="evidence" value="ECO:0007669"/>
    <property type="project" value="InterPro"/>
</dbReference>
<dbReference type="GO" id="GO:0140664">
    <property type="term" value="F:ATP-dependent DNA damage sensor activity"/>
    <property type="evidence" value="ECO:0007669"/>
    <property type="project" value="InterPro"/>
</dbReference>
<dbReference type="GO" id="GO:0003684">
    <property type="term" value="F:damaged DNA binding"/>
    <property type="evidence" value="ECO:0007669"/>
    <property type="project" value="UniProtKB-UniRule"/>
</dbReference>
<dbReference type="GO" id="GO:0003697">
    <property type="term" value="F:single-stranded DNA binding"/>
    <property type="evidence" value="ECO:0007669"/>
    <property type="project" value="UniProtKB-UniRule"/>
</dbReference>
<dbReference type="GO" id="GO:0006310">
    <property type="term" value="P:DNA recombination"/>
    <property type="evidence" value="ECO:0007669"/>
    <property type="project" value="UniProtKB-UniRule"/>
</dbReference>
<dbReference type="GO" id="GO:0006281">
    <property type="term" value="P:DNA repair"/>
    <property type="evidence" value="ECO:0007669"/>
    <property type="project" value="UniProtKB-UniRule"/>
</dbReference>
<dbReference type="GO" id="GO:0009432">
    <property type="term" value="P:SOS response"/>
    <property type="evidence" value="ECO:0007669"/>
    <property type="project" value="UniProtKB-UniRule"/>
</dbReference>
<dbReference type="CDD" id="cd00983">
    <property type="entry name" value="RecA"/>
    <property type="match status" value="1"/>
</dbReference>
<dbReference type="FunFam" id="3.40.50.300:FF:000087">
    <property type="entry name" value="Recombinase RecA"/>
    <property type="match status" value="1"/>
</dbReference>
<dbReference type="Gene3D" id="3.40.50.300">
    <property type="entry name" value="P-loop containing nucleotide triphosphate hydrolases"/>
    <property type="match status" value="1"/>
</dbReference>
<dbReference type="HAMAP" id="MF_00268">
    <property type="entry name" value="RecA"/>
    <property type="match status" value="1"/>
</dbReference>
<dbReference type="InterPro" id="IPR003593">
    <property type="entry name" value="AAA+_ATPase"/>
</dbReference>
<dbReference type="InterPro" id="IPR013765">
    <property type="entry name" value="DNA_recomb/repair_RecA"/>
</dbReference>
<dbReference type="InterPro" id="IPR020584">
    <property type="entry name" value="DNA_recomb/repair_RecA_CS"/>
</dbReference>
<dbReference type="InterPro" id="IPR027417">
    <property type="entry name" value="P-loop_NTPase"/>
</dbReference>
<dbReference type="InterPro" id="IPR049261">
    <property type="entry name" value="RecA-like_C"/>
</dbReference>
<dbReference type="InterPro" id="IPR049428">
    <property type="entry name" value="RecA-like_N"/>
</dbReference>
<dbReference type="InterPro" id="IPR020588">
    <property type="entry name" value="RecA_ATP-bd"/>
</dbReference>
<dbReference type="InterPro" id="IPR023400">
    <property type="entry name" value="RecA_C_sf"/>
</dbReference>
<dbReference type="InterPro" id="IPR020587">
    <property type="entry name" value="RecA_monomer-monomer_interface"/>
</dbReference>
<dbReference type="NCBIfam" id="TIGR02012">
    <property type="entry name" value="tigrfam_recA"/>
    <property type="match status" value="1"/>
</dbReference>
<dbReference type="PANTHER" id="PTHR45900:SF1">
    <property type="entry name" value="MITOCHONDRIAL DNA REPAIR PROTEIN RECA HOMOLOG-RELATED"/>
    <property type="match status" value="1"/>
</dbReference>
<dbReference type="PANTHER" id="PTHR45900">
    <property type="entry name" value="RECA"/>
    <property type="match status" value="1"/>
</dbReference>
<dbReference type="Pfam" id="PF00154">
    <property type="entry name" value="RecA"/>
    <property type="match status" value="1"/>
</dbReference>
<dbReference type="Pfam" id="PF21096">
    <property type="entry name" value="RecA_C"/>
    <property type="match status" value="1"/>
</dbReference>
<dbReference type="PRINTS" id="PR00142">
    <property type="entry name" value="RECA"/>
</dbReference>
<dbReference type="SMART" id="SM00382">
    <property type="entry name" value="AAA"/>
    <property type="match status" value="1"/>
</dbReference>
<dbReference type="SUPFAM" id="SSF52540">
    <property type="entry name" value="P-loop containing nucleoside triphosphate hydrolases"/>
    <property type="match status" value="1"/>
</dbReference>
<dbReference type="SUPFAM" id="SSF54752">
    <property type="entry name" value="RecA protein, C-terminal domain"/>
    <property type="match status" value="1"/>
</dbReference>
<dbReference type="PROSITE" id="PS00321">
    <property type="entry name" value="RECA_1"/>
    <property type="match status" value="1"/>
</dbReference>
<dbReference type="PROSITE" id="PS50162">
    <property type="entry name" value="RECA_2"/>
    <property type="match status" value="1"/>
</dbReference>
<dbReference type="PROSITE" id="PS50163">
    <property type="entry name" value="RECA_3"/>
    <property type="match status" value="1"/>
</dbReference>
<sequence>MDDNKAKALKAALAQIEKQFGKNTIMHLGDNSATLDVDVVSTGSLGLDIALGIGGLPKGRIVEIYGPESSGKTTMTLQAIAACQKQGGVCAFIDAEHALDPVYARKLGVNTDDLLLSQPDNGEQALEITDMLVRSGAIDMIVIDSVAALTPRAEIEGEMGDSHMGLQARLMSQALRKITGNAKRSNCMVLFINQIRMKIGVMFGSPETTTGGNALKFYASVRMDIRRIGAVKNGDEIIGNQTRVKVIKNKMAPPFRQAEFEITYGEGTNHLAEVIDLGVEIGAVGKAGSWYSYGDEKIGQGKANSVLFLKENPAIAEEIEAKIRAEKLGTKDDSKVATVDKANEEQAAEPVQ</sequence>
<comment type="function">
    <text evidence="1">Can catalyze the hydrolysis of ATP in the presence of single-stranded DNA, the ATP-dependent uptake of single-stranded DNA by duplex DNA, and the ATP-dependent hybridization of homologous single-stranded DNAs. It interacts with LexA causing its activation and leading to its autocatalytic cleavage.</text>
</comment>
<comment type="subcellular location">
    <subcellularLocation>
        <location evidence="1">Cytoplasm</location>
    </subcellularLocation>
</comment>
<comment type="similarity">
    <text evidence="1">Belongs to the RecA family.</text>
</comment>
<feature type="chain" id="PRO_1000047974" description="Protein RecA">
    <location>
        <begin position="1"/>
        <end position="352"/>
    </location>
</feature>
<feature type="region of interest" description="Disordered" evidence="2">
    <location>
        <begin position="330"/>
        <end position="352"/>
    </location>
</feature>
<feature type="binding site" evidence="1">
    <location>
        <begin position="66"/>
        <end position="73"/>
    </location>
    <ligand>
        <name>ATP</name>
        <dbReference type="ChEBI" id="CHEBI:30616"/>
    </ligand>
</feature>
<organism>
    <name type="scientific">Psychrobacter cryohalolentis (strain ATCC BAA-1226 / DSM 17306 / VKM B-2378 / K5)</name>
    <dbReference type="NCBI Taxonomy" id="335284"/>
    <lineage>
        <taxon>Bacteria</taxon>
        <taxon>Pseudomonadati</taxon>
        <taxon>Pseudomonadota</taxon>
        <taxon>Gammaproteobacteria</taxon>
        <taxon>Moraxellales</taxon>
        <taxon>Moraxellaceae</taxon>
        <taxon>Psychrobacter</taxon>
    </lineage>
</organism>
<accession>Q1Q962</accession>
<proteinExistence type="inferred from homology"/>
<protein>
    <recommendedName>
        <fullName evidence="1">Protein RecA</fullName>
    </recommendedName>
    <alternativeName>
        <fullName evidence="1">Recombinase A</fullName>
    </alternativeName>
</protein>
<evidence type="ECO:0000255" key="1">
    <source>
        <dbReference type="HAMAP-Rule" id="MF_00268"/>
    </source>
</evidence>
<evidence type="ECO:0000256" key="2">
    <source>
        <dbReference type="SAM" id="MobiDB-lite"/>
    </source>
</evidence>
<keyword id="KW-0067">ATP-binding</keyword>
<keyword id="KW-0963">Cytoplasm</keyword>
<keyword id="KW-0227">DNA damage</keyword>
<keyword id="KW-0233">DNA recombination</keyword>
<keyword id="KW-0234">DNA repair</keyword>
<keyword id="KW-0238">DNA-binding</keyword>
<keyword id="KW-0547">Nucleotide-binding</keyword>
<keyword id="KW-0742">SOS response</keyword>
<name>RECA_PSYCK</name>